<comment type="function">
    <text evidence="1">This protein binds specifically to 23S rRNA; its binding is stimulated by other ribosomal proteins, e.g. L4, L17, and L20. It is important during the early stages of 50S assembly. It makes multiple contacts with different domains of the 23S rRNA in the assembled 50S subunit and ribosome (By similarity).</text>
</comment>
<comment type="function">
    <text evidence="1">The globular domain of the protein is located near the polypeptide exit tunnel on the outside of the subunit, while an extended beta-hairpin is found that lines the wall of the exit tunnel in the center of the 70S ribosome.</text>
</comment>
<comment type="subunit">
    <text evidence="1">Part of the 50S ribosomal subunit.</text>
</comment>
<comment type="similarity">
    <text evidence="1">Belongs to the universal ribosomal protein uL22 family.</text>
</comment>
<dbReference type="EMBL" id="CP000133">
    <property type="protein sequence ID" value="ABC90475.1"/>
    <property type="molecule type" value="Genomic_DNA"/>
</dbReference>
<dbReference type="RefSeq" id="WP_004674922.1">
    <property type="nucleotide sequence ID" value="NC_007761.1"/>
</dbReference>
<dbReference type="SMR" id="Q2K9L1"/>
<dbReference type="GeneID" id="66145861"/>
<dbReference type="KEGG" id="ret:RHE_CH01680"/>
<dbReference type="eggNOG" id="COG0091">
    <property type="taxonomic scope" value="Bacteria"/>
</dbReference>
<dbReference type="HOGENOM" id="CLU_083987_3_0_5"/>
<dbReference type="OrthoDB" id="9805969at2"/>
<dbReference type="Proteomes" id="UP000001936">
    <property type="component" value="Chromosome"/>
</dbReference>
<dbReference type="GO" id="GO:0022625">
    <property type="term" value="C:cytosolic large ribosomal subunit"/>
    <property type="evidence" value="ECO:0007669"/>
    <property type="project" value="TreeGrafter"/>
</dbReference>
<dbReference type="GO" id="GO:0019843">
    <property type="term" value="F:rRNA binding"/>
    <property type="evidence" value="ECO:0007669"/>
    <property type="project" value="UniProtKB-UniRule"/>
</dbReference>
<dbReference type="GO" id="GO:0003735">
    <property type="term" value="F:structural constituent of ribosome"/>
    <property type="evidence" value="ECO:0007669"/>
    <property type="project" value="InterPro"/>
</dbReference>
<dbReference type="GO" id="GO:0006412">
    <property type="term" value="P:translation"/>
    <property type="evidence" value="ECO:0007669"/>
    <property type="project" value="UniProtKB-UniRule"/>
</dbReference>
<dbReference type="CDD" id="cd00336">
    <property type="entry name" value="Ribosomal_L22"/>
    <property type="match status" value="1"/>
</dbReference>
<dbReference type="Gene3D" id="3.90.470.10">
    <property type="entry name" value="Ribosomal protein L22/L17"/>
    <property type="match status" value="1"/>
</dbReference>
<dbReference type="HAMAP" id="MF_01331_B">
    <property type="entry name" value="Ribosomal_uL22_B"/>
    <property type="match status" value="1"/>
</dbReference>
<dbReference type="InterPro" id="IPR001063">
    <property type="entry name" value="Ribosomal_uL22"/>
</dbReference>
<dbReference type="InterPro" id="IPR005727">
    <property type="entry name" value="Ribosomal_uL22_bac/chlpt-type"/>
</dbReference>
<dbReference type="InterPro" id="IPR047867">
    <property type="entry name" value="Ribosomal_uL22_bac/org-type"/>
</dbReference>
<dbReference type="InterPro" id="IPR018260">
    <property type="entry name" value="Ribosomal_uL22_CS"/>
</dbReference>
<dbReference type="InterPro" id="IPR036394">
    <property type="entry name" value="Ribosomal_uL22_sf"/>
</dbReference>
<dbReference type="NCBIfam" id="TIGR01044">
    <property type="entry name" value="rplV_bact"/>
    <property type="match status" value="1"/>
</dbReference>
<dbReference type="PANTHER" id="PTHR13501">
    <property type="entry name" value="CHLOROPLAST 50S RIBOSOMAL PROTEIN L22-RELATED"/>
    <property type="match status" value="1"/>
</dbReference>
<dbReference type="PANTHER" id="PTHR13501:SF8">
    <property type="entry name" value="LARGE RIBOSOMAL SUBUNIT PROTEIN UL22M"/>
    <property type="match status" value="1"/>
</dbReference>
<dbReference type="Pfam" id="PF00237">
    <property type="entry name" value="Ribosomal_L22"/>
    <property type="match status" value="1"/>
</dbReference>
<dbReference type="SUPFAM" id="SSF54843">
    <property type="entry name" value="Ribosomal protein L22"/>
    <property type="match status" value="1"/>
</dbReference>
<dbReference type="PROSITE" id="PS00464">
    <property type="entry name" value="RIBOSOMAL_L22"/>
    <property type="match status" value="1"/>
</dbReference>
<protein>
    <recommendedName>
        <fullName evidence="1">Large ribosomal subunit protein uL22</fullName>
    </recommendedName>
    <alternativeName>
        <fullName evidence="2">50S ribosomal protein L22</fullName>
    </alternativeName>
</protein>
<name>RL22_RHIEC</name>
<feature type="chain" id="PRO_0000243192" description="Large ribosomal subunit protein uL22">
    <location>
        <begin position="1"/>
        <end position="129"/>
    </location>
</feature>
<reference key="1">
    <citation type="journal article" date="2006" name="Proc. Natl. Acad. Sci. U.S.A.">
        <title>The partitioned Rhizobium etli genome: genetic and metabolic redundancy in seven interacting replicons.</title>
        <authorList>
            <person name="Gonzalez V."/>
            <person name="Santamaria R.I."/>
            <person name="Bustos P."/>
            <person name="Hernandez-Gonzalez I."/>
            <person name="Medrano-Soto A."/>
            <person name="Moreno-Hagelsieb G."/>
            <person name="Janga S.C."/>
            <person name="Ramirez M.A."/>
            <person name="Jimenez-Jacinto V."/>
            <person name="Collado-Vides J."/>
            <person name="Davila G."/>
        </authorList>
    </citation>
    <scope>NUCLEOTIDE SEQUENCE [LARGE SCALE GENOMIC DNA]</scope>
    <source>
        <strain>ATCC 51251 / DSM 11541 / JCM 21823 / NBRC 15573 / CFN 42</strain>
    </source>
</reference>
<organism>
    <name type="scientific">Rhizobium etli (strain ATCC 51251 / DSM 11541 / JCM 21823 / NBRC 15573 / CFN 42)</name>
    <dbReference type="NCBI Taxonomy" id="347834"/>
    <lineage>
        <taxon>Bacteria</taxon>
        <taxon>Pseudomonadati</taxon>
        <taxon>Pseudomonadota</taxon>
        <taxon>Alphaproteobacteria</taxon>
        <taxon>Hyphomicrobiales</taxon>
        <taxon>Rhizobiaceae</taxon>
        <taxon>Rhizobium/Agrobacterium group</taxon>
        <taxon>Rhizobium</taxon>
    </lineage>
</organism>
<sequence length="129" mass="14137">MGKAKAERRLKDNEAQAVARTLRVSPQKLNLVAAAIRGKKVERALAELEFSRKRIAGAVKKTLESAIANAENNHDLDVDALVVAEAYVGKSIVMKRFHARGRGRASRIEKPFAHLTIVVREVQAAEEAA</sequence>
<accession>Q2K9L1</accession>
<proteinExistence type="inferred from homology"/>
<keyword id="KW-1185">Reference proteome</keyword>
<keyword id="KW-0687">Ribonucleoprotein</keyword>
<keyword id="KW-0689">Ribosomal protein</keyword>
<keyword id="KW-0694">RNA-binding</keyword>
<keyword id="KW-0699">rRNA-binding</keyword>
<gene>
    <name evidence="1" type="primary">rplV</name>
    <name type="ordered locus">RHE_CH01680</name>
</gene>
<evidence type="ECO:0000255" key="1">
    <source>
        <dbReference type="HAMAP-Rule" id="MF_01331"/>
    </source>
</evidence>
<evidence type="ECO:0000305" key="2"/>